<proteinExistence type="inferred from homology"/>
<name>RIMO_OLEA2</name>
<protein>
    <recommendedName>
        <fullName evidence="1">Ribosomal protein uS12 methylthiotransferase RimO</fullName>
        <shortName evidence="1">uS12 MTTase</shortName>
        <shortName evidence="1">uS12 methylthiotransferase</shortName>
        <ecNumber evidence="1">2.8.4.4</ecNumber>
    </recommendedName>
    <alternativeName>
        <fullName evidence="1">Ribosomal protein uS12 (aspartate-C(3))-methylthiotransferase</fullName>
    </alternativeName>
    <alternativeName>
        <fullName evidence="1">Ribosome maturation factor RimO</fullName>
    </alternativeName>
</protein>
<evidence type="ECO:0000255" key="1">
    <source>
        <dbReference type="HAMAP-Rule" id="MF_01865"/>
    </source>
</evidence>
<evidence type="ECO:0000255" key="2">
    <source>
        <dbReference type="PROSITE-ProRule" id="PRU01266"/>
    </source>
</evidence>
<accession>Q315T9</accession>
<gene>
    <name evidence="1" type="primary">rimO</name>
    <name type="ordered locus">Dde_0506</name>
</gene>
<dbReference type="EC" id="2.8.4.4" evidence="1"/>
<dbReference type="EMBL" id="CP000112">
    <property type="protein sequence ID" value="ABB37307.1"/>
    <property type="molecule type" value="Genomic_DNA"/>
</dbReference>
<dbReference type="RefSeq" id="WP_011366628.1">
    <property type="nucleotide sequence ID" value="NC_007519.1"/>
</dbReference>
<dbReference type="SMR" id="Q315T9"/>
<dbReference type="STRING" id="207559.Dde_0506"/>
<dbReference type="KEGG" id="dde:Dde_0506"/>
<dbReference type="eggNOG" id="COG0621">
    <property type="taxonomic scope" value="Bacteria"/>
</dbReference>
<dbReference type="HOGENOM" id="CLU_018697_0_1_7"/>
<dbReference type="Proteomes" id="UP000002710">
    <property type="component" value="Chromosome"/>
</dbReference>
<dbReference type="GO" id="GO:0005829">
    <property type="term" value="C:cytosol"/>
    <property type="evidence" value="ECO:0007669"/>
    <property type="project" value="TreeGrafter"/>
</dbReference>
<dbReference type="GO" id="GO:0051539">
    <property type="term" value="F:4 iron, 4 sulfur cluster binding"/>
    <property type="evidence" value="ECO:0007669"/>
    <property type="project" value="UniProtKB-UniRule"/>
</dbReference>
<dbReference type="GO" id="GO:0035599">
    <property type="term" value="F:aspartic acid methylthiotransferase activity"/>
    <property type="evidence" value="ECO:0007669"/>
    <property type="project" value="TreeGrafter"/>
</dbReference>
<dbReference type="GO" id="GO:0046872">
    <property type="term" value="F:metal ion binding"/>
    <property type="evidence" value="ECO:0007669"/>
    <property type="project" value="UniProtKB-KW"/>
</dbReference>
<dbReference type="GO" id="GO:0103039">
    <property type="term" value="F:protein methylthiotransferase activity"/>
    <property type="evidence" value="ECO:0007669"/>
    <property type="project" value="UniProtKB-EC"/>
</dbReference>
<dbReference type="GO" id="GO:0006400">
    <property type="term" value="P:tRNA modification"/>
    <property type="evidence" value="ECO:0007669"/>
    <property type="project" value="InterPro"/>
</dbReference>
<dbReference type="CDD" id="cd01335">
    <property type="entry name" value="Radical_SAM"/>
    <property type="match status" value="1"/>
</dbReference>
<dbReference type="Gene3D" id="3.40.50.12160">
    <property type="entry name" value="Methylthiotransferase, N-terminal domain"/>
    <property type="match status" value="1"/>
</dbReference>
<dbReference type="Gene3D" id="2.40.50.140">
    <property type="entry name" value="Nucleic acid-binding proteins"/>
    <property type="match status" value="1"/>
</dbReference>
<dbReference type="Gene3D" id="3.80.30.20">
    <property type="entry name" value="tm_1862 like domain"/>
    <property type="match status" value="1"/>
</dbReference>
<dbReference type="HAMAP" id="MF_01865">
    <property type="entry name" value="MTTase_RimO"/>
    <property type="match status" value="1"/>
</dbReference>
<dbReference type="InterPro" id="IPR006638">
    <property type="entry name" value="Elp3/MiaA/NifB-like_rSAM"/>
</dbReference>
<dbReference type="InterPro" id="IPR005839">
    <property type="entry name" value="Methylthiotransferase"/>
</dbReference>
<dbReference type="InterPro" id="IPR020612">
    <property type="entry name" value="Methylthiotransferase_CS"/>
</dbReference>
<dbReference type="InterPro" id="IPR013848">
    <property type="entry name" value="Methylthiotransferase_N"/>
</dbReference>
<dbReference type="InterPro" id="IPR038135">
    <property type="entry name" value="Methylthiotransferase_N_sf"/>
</dbReference>
<dbReference type="InterPro" id="IPR012340">
    <property type="entry name" value="NA-bd_OB-fold"/>
</dbReference>
<dbReference type="InterPro" id="IPR005840">
    <property type="entry name" value="Ribosomal_uS12_MeSTrfase_RimO"/>
</dbReference>
<dbReference type="InterPro" id="IPR007197">
    <property type="entry name" value="rSAM"/>
</dbReference>
<dbReference type="InterPro" id="IPR023404">
    <property type="entry name" value="rSAM_horseshoe"/>
</dbReference>
<dbReference type="InterPro" id="IPR002792">
    <property type="entry name" value="TRAM_dom"/>
</dbReference>
<dbReference type="NCBIfam" id="TIGR01125">
    <property type="entry name" value="30S ribosomal protein S12 methylthiotransferase RimO"/>
    <property type="match status" value="1"/>
</dbReference>
<dbReference type="NCBIfam" id="TIGR00089">
    <property type="entry name" value="MiaB/RimO family radical SAM methylthiotransferase"/>
    <property type="match status" value="1"/>
</dbReference>
<dbReference type="PANTHER" id="PTHR43837">
    <property type="entry name" value="RIBOSOMAL PROTEIN S12 METHYLTHIOTRANSFERASE RIMO"/>
    <property type="match status" value="1"/>
</dbReference>
<dbReference type="PANTHER" id="PTHR43837:SF1">
    <property type="entry name" value="RIBOSOMAL PROTEIN US12 METHYLTHIOTRANSFERASE RIMO"/>
    <property type="match status" value="1"/>
</dbReference>
<dbReference type="Pfam" id="PF04055">
    <property type="entry name" value="Radical_SAM"/>
    <property type="match status" value="1"/>
</dbReference>
<dbReference type="Pfam" id="PF18693">
    <property type="entry name" value="TRAM_2"/>
    <property type="match status" value="1"/>
</dbReference>
<dbReference type="Pfam" id="PF00919">
    <property type="entry name" value="UPF0004"/>
    <property type="match status" value="1"/>
</dbReference>
<dbReference type="SFLD" id="SFLDG01082">
    <property type="entry name" value="B12-binding_domain_containing"/>
    <property type="match status" value="1"/>
</dbReference>
<dbReference type="SFLD" id="SFLDG01061">
    <property type="entry name" value="methylthiotransferase"/>
    <property type="match status" value="1"/>
</dbReference>
<dbReference type="SFLD" id="SFLDS00029">
    <property type="entry name" value="Radical_SAM"/>
    <property type="match status" value="1"/>
</dbReference>
<dbReference type="SMART" id="SM00729">
    <property type="entry name" value="Elp3"/>
    <property type="match status" value="1"/>
</dbReference>
<dbReference type="SUPFAM" id="SSF102114">
    <property type="entry name" value="Radical SAM enzymes"/>
    <property type="match status" value="1"/>
</dbReference>
<dbReference type="PROSITE" id="PS51449">
    <property type="entry name" value="MTTASE_N"/>
    <property type="match status" value="1"/>
</dbReference>
<dbReference type="PROSITE" id="PS01278">
    <property type="entry name" value="MTTASE_RADICAL"/>
    <property type="match status" value="1"/>
</dbReference>
<dbReference type="PROSITE" id="PS51918">
    <property type="entry name" value="RADICAL_SAM"/>
    <property type="match status" value="1"/>
</dbReference>
<dbReference type="PROSITE" id="PS50926">
    <property type="entry name" value="TRAM"/>
    <property type="match status" value="1"/>
</dbReference>
<sequence>MISVYSISLGCPKNRVDTEWLLGVLGPEVRPVREMADADLVLINTCGFIAPAVEESVRTVVEAVAELEDLPRRPLLAVAGCLVGRYGRQDLAAELPEVDLWLTNRDMDAWPEMIGRALGVAVHVPPVRLLSTGPSYAYLKVSDGCGHNCSFCTIPSIRGGLVSTPADVLEAEAVNLLSRGVKELIFVAQDVAAYGRDMGLRHGLRSLLDRLLPLDGLERLRLMYLYPAGLDAGLLRYLRDAGKPFVPYFDIPVQHAHPDVLSRMGRPFARNPREVVDRVRDVFPEAALRTSIIVGFPGETQQHYDHLTRFVQDVRFMHLGVFAYRAEEGTPAAGMPGQVDEVEKDWRRDALMEVQAEISEEILEGFTGSDEDVLVDAAHEEWPGLHVGRTWFQAPEIDGVTYISGPGVKPGAMVRAEIVESRTYDLVALS</sequence>
<keyword id="KW-0004">4Fe-4S</keyword>
<keyword id="KW-0963">Cytoplasm</keyword>
<keyword id="KW-0408">Iron</keyword>
<keyword id="KW-0411">Iron-sulfur</keyword>
<keyword id="KW-0479">Metal-binding</keyword>
<keyword id="KW-1185">Reference proteome</keyword>
<keyword id="KW-0949">S-adenosyl-L-methionine</keyword>
<keyword id="KW-0808">Transferase</keyword>
<comment type="function">
    <text evidence="1">Catalyzes the methylthiolation of an aspartic acid residue of ribosomal protein uS12.</text>
</comment>
<comment type="catalytic activity">
    <reaction evidence="1">
        <text>L-aspartate(89)-[ribosomal protein uS12]-hydrogen + (sulfur carrier)-SH + AH2 + 2 S-adenosyl-L-methionine = 3-methylsulfanyl-L-aspartate(89)-[ribosomal protein uS12]-hydrogen + (sulfur carrier)-H + 5'-deoxyadenosine + L-methionine + A + S-adenosyl-L-homocysteine + 2 H(+)</text>
        <dbReference type="Rhea" id="RHEA:37087"/>
        <dbReference type="Rhea" id="RHEA-COMP:10460"/>
        <dbReference type="Rhea" id="RHEA-COMP:10461"/>
        <dbReference type="Rhea" id="RHEA-COMP:14737"/>
        <dbReference type="Rhea" id="RHEA-COMP:14739"/>
        <dbReference type="ChEBI" id="CHEBI:13193"/>
        <dbReference type="ChEBI" id="CHEBI:15378"/>
        <dbReference type="ChEBI" id="CHEBI:17319"/>
        <dbReference type="ChEBI" id="CHEBI:17499"/>
        <dbReference type="ChEBI" id="CHEBI:29917"/>
        <dbReference type="ChEBI" id="CHEBI:29961"/>
        <dbReference type="ChEBI" id="CHEBI:57844"/>
        <dbReference type="ChEBI" id="CHEBI:57856"/>
        <dbReference type="ChEBI" id="CHEBI:59789"/>
        <dbReference type="ChEBI" id="CHEBI:64428"/>
        <dbReference type="ChEBI" id="CHEBI:73599"/>
        <dbReference type="EC" id="2.8.4.4"/>
    </reaction>
</comment>
<comment type="cofactor">
    <cofactor evidence="1">
        <name>[4Fe-4S] cluster</name>
        <dbReference type="ChEBI" id="CHEBI:49883"/>
    </cofactor>
    <text evidence="1">Binds 2 [4Fe-4S] clusters. One cluster is coordinated with 3 cysteines and an exchangeable S-adenosyl-L-methionine.</text>
</comment>
<comment type="subcellular location">
    <subcellularLocation>
        <location evidence="1">Cytoplasm</location>
    </subcellularLocation>
</comment>
<comment type="similarity">
    <text evidence="1">Belongs to the methylthiotransferase family. RimO subfamily.</text>
</comment>
<organism>
    <name type="scientific">Oleidesulfovibrio alaskensis (strain ATCC BAA-1058 / DSM 17464 / G20)</name>
    <name type="common">Desulfovibrio alaskensis</name>
    <dbReference type="NCBI Taxonomy" id="207559"/>
    <lineage>
        <taxon>Bacteria</taxon>
        <taxon>Pseudomonadati</taxon>
        <taxon>Thermodesulfobacteriota</taxon>
        <taxon>Desulfovibrionia</taxon>
        <taxon>Desulfovibrionales</taxon>
        <taxon>Desulfovibrionaceae</taxon>
        <taxon>Oleidesulfovibrio</taxon>
    </lineage>
</organism>
<feature type="chain" id="PRO_0000374807" description="Ribosomal protein uS12 methylthiotransferase RimO">
    <location>
        <begin position="1"/>
        <end position="430"/>
    </location>
</feature>
<feature type="domain" description="MTTase N-terminal" evidence="1">
    <location>
        <begin position="2"/>
        <end position="119"/>
    </location>
</feature>
<feature type="domain" description="Radical SAM core" evidence="2">
    <location>
        <begin position="131"/>
        <end position="361"/>
    </location>
</feature>
<feature type="domain" description="TRAM" evidence="1">
    <location>
        <begin position="364"/>
        <end position="430"/>
    </location>
</feature>
<feature type="binding site" evidence="1">
    <location>
        <position position="11"/>
    </location>
    <ligand>
        <name>[4Fe-4S] cluster</name>
        <dbReference type="ChEBI" id="CHEBI:49883"/>
        <label>1</label>
    </ligand>
</feature>
<feature type="binding site" evidence="1">
    <location>
        <position position="46"/>
    </location>
    <ligand>
        <name>[4Fe-4S] cluster</name>
        <dbReference type="ChEBI" id="CHEBI:49883"/>
        <label>1</label>
    </ligand>
</feature>
<feature type="binding site" evidence="1">
    <location>
        <position position="81"/>
    </location>
    <ligand>
        <name>[4Fe-4S] cluster</name>
        <dbReference type="ChEBI" id="CHEBI:49883"/>
        <label>1</label>
    </ligand>
</feature>
<feature type="binding site" evidence="1">
    <location>
        <position position="145"/>
    </location>
    <ligand>
        <name>[4Fe-4S] cluster</name>
        <dbReference type="ChEBI" id="CHEBI:49883"/>
        <label>2</label>
        <note>4Fe-4S-S-AdoMet</note>
    </ligand>
</feature>
<feature type="binding site" evidence="1">
    <location>
        <position position="149"/>
    </location>
    <ligand>
        <name>[4Fe-4S] cluster</name>
        <dbReference type="ChEBI" id="CHEBI:49883"/>
        <label>2</label>
        <note>4Fe-4S-S-AdoMet</note>
    </ligand>
</feature>
<feature type="binding site" evidence="1">
    <location>
        <position position="152"/>
    </location>
    <ligand>
        <name>[4Fe-4S] cluster</name>
        <dbReference type="ChEBI" id="CHEBI:49883"/>
        <label>2</label>
        <note>4Fe-4S-S-AdoMet</note>
    </ligand>
</feature>
<reference key="1">
    <citation type="journal article" date="2011" name="J. Bacteriol.">
        <title>Complete genome sequence and updated annotation of Desulfovibrio alaskensis G20.</title>
        <authorList>
            <person name="Hauser L.J."/>
            <person name="Land M.L."/>
            <person name="Brown S.D."/>
            <person name="Larimer F."/>
            <person name="Keller K.L."/>
            <person name="Rapp-Giles B.J."/>
            <person name="Price M.N."/>
            <person name="Lin M."/>
            <person name="Bruce D.C."/>
            <person name="Detter J.C."/>
            <person name="Tapia R."/>
            <person name="Han C.S."/>
            <person name="Goodwin L.A."/>
            <person name="Cheng J.F."/>
            <person name="Pitluck S."/>
            <person name="Copeland A."/>
            <person name="Lucas S."/>
            <person name="Nolan M."/>
            <person name="Lapidus A.L."/>
            <person name="Palumbo A.V."/>
            <person name="Wall J.D."/>
        </authorList>
    </citation>
    <scope>NUCLEOTIDE SEQUENCE [LARGE SCALE GENOMIC DNA]</scope>
    <source>
        <strain>ATCC BAA-1058 / DSM 17464 / G20</strain>
    </source>
</reference>